<dbReference type="EC" id="3.5.99.6" evidence="1"/>
<dbReference type="EMBL" id="CP000046">
    <property type="protein sequence ID" value="AAW37725.1"/>
    <property type="molecule type" value="Genomic_DNA"/>
</dbReference>
<dbReference type="RefSeq" id="WP_000866415.1">
    <property type="nucleotide sequence ID" value="NZ_JBGOFO010000005.1"/>
</dbReference>
<dbReference type="SMR" id="Q5HIA6"/>
<dbReference type="KEGG" id="sac:SACOL0616"/>
<dbReference type="HOGENOM" id="CLU_049611_1_1_9"/>
<dbReference type="UniPathway" id="UPA00629">
    <property type="reaction ID" value="UER00684"/>
</dbReference>
<dbReference type="Proteomes" id="UP000000530">
    <property type="component" value="Chromosome"/>
</dbReference>
<dbReference type="GO" id="GO:0005737">
    <property type="term" value="C:cytoplasm"/>
    <property type="evidence" value="ECO:0007669"/>
    <property type="project" value="TreeGrafter"/>
</dbReference>
<dbReference type="GO" id="GO:0004342">
    <property type="term" value="F:glucosamine-6-phosphate deaminase activity"/>
    <property type="evidence" value="ECO:0007669"/>
    <property type="project" value="UniProtKB-UniRule"/>
</dbReference>
<dbReference type="GO" id="GO:0042802">
    <property type="term" value="F:identical protein binding"/>
    <property type="evidence" value="ECO:0007669"/>
    <property type="project" value="TreeGrafter"/>
</dbReference>
<dbReference type="GO" id="GO:0005975">
    <property type="term" value="P:carbohydrate metabolic process"/>
    <property type="evidence" value="ECO:0007669"/>
    <property type="project" value="InterPro"/>
</dbReference>
<dbReference type="GO" id="GO:0006043">
    <property type="term" value="P:glucosamine catabolic process"/>
    <property type="evidence" value="ECO:0007669"/>
    <property type="project" value="TreeGrafter"/>
</dbReference>
<dbReference type="GO" id="GO:0006046">
    <property type="term" value="P:N-acetylglucosamine catabolic process"/>
    <property type="evidence" value="ECO:0007669"/>
    <property type="project" value="TreeGrafter"/>
</dbReference>
<dbReference type="GO" id="GO:0019262">
    <property type="term" value="P:N-acetylneuraminate catabolic process"/>
    <property type="evidence" value="ECO:0007669"/>
    <property type="project" value="UniProtKB-UniRule"/>
</dbReference>
<dbReference type="CDD" id="cd01399">
    <property type="entry name" value="GlcN6P_deaminase"/>
    <property type="match status" value="1"/>
</dbReference>
<dbReference type="FunFam" id="3.40.50.1360:FF:000003">
    <property type="entry name" value="Glucosamine-6-phosphate deaminase"/>
    <property type="match status" value="1"/>
</dbReference>
<dbReference type="Gene3D" id="3.40.50.1360">
    <property type="match status" value="1"/>
</dbReference>
<dbReference type="HAMAP" id="MF_01241">
    <property type="entry name" value="GlcN6P_deamin"/>
    <property type="match status" value="1"/>
</dbReference>
<dbReference type="InterPro" id="IPR006148">
    <property type="entry name" value="Glc/Gal-6P_isomerase"/>
</dbReference>
<dbReference type="InterPro" id="IPR004547">
    <property type="entry name" value="Glucosamine6P_isomerase"/>
</dbReference>
<dbReference type="InterPro" id="IPR018321">
    <property type="entry name" value="Glucosamine6P_isomerase_CS"/>
</dbReference>
<dbReference type="InterPro" id="IPR037171">
    <property type="entry name" value="NagB/RpiA_transferase-like"/>
</dbReference>
<dbReference type="NCBIfam" id="TIGR00502">
    <property type="entry name" value="nagB"/>
    <property type="match status" value="1"/>
</dbReference>
<dbReference type="PANTHER" id="PTHR11280">
    <property type="entry name" value="GLUCOSAMINE-6-PHOSPHATE ISOMERASE"/>
    <property type="match status" value="1"/>
</dbReference>
<dbReference type="PANTHER" id="PTHR11280:SF5">
    <property type="entry name" value="GLUCOSAMINE-6-PHOSPHATE ISOMERASE"/>
    <property type="match status" value="1"/>
</dbReference>
<dbReference type="Pfam" id="PF01182">
    <property type="entry name" value="Glucosamine_iso"/>
    <property type="match status" value="1"/>
</dbReference>
<dbReference type="SUPFAM" id="SSF100950">
    <property type="entry name" value="NagB/RpiA/CoA transferase-like"/>
    <property type="match status" value="1"/>
</dbReference>
<dbReference type="PROSITE" id="PS01161">
    <property type="entry name" value="GLC_GALNAC_ISOMERASE"/>
    <property type="match status" value="1"/>
</dbReference>
<feature type="chain" id="PRO_0000160162" description="Glucosamine-6-phosphate deaminase">
    <location>
        <begin position="1"/>
        <end position="252"/>
    </location>
</feature>
<feature type="active site" description="Proton acceptor; for enolization step" evidence="1">
    <location>
        <position position="67"/>
    </location>
</feature>
<feature type="active site" description="For ring-opening step" evidence="1">
    <location>
        <position position="137"/>
    </location>
</feature>
<feature type="active site" description="Proton acceptor; for ring-opening step" evidence="1">
    <location>
        <position position="139"/>
    </location>
</feature>
<feature type="active site" description="For ring-opening step" evidence="1">
    <location>
        <position position="144"/>
    </location>
</feature>
<comment type="function">
    <text evidence="1">Catalyzes the reversible isomerization-deamination of glucosamine 6-phosphate (GlcN6P) to form fructose 6-phosphate (Fru6P) and ammonium ion.</text>
</comment>
<comment type="catalytic activity">
    <reaction evidence="1">
        <text>alpha-D-glucosamine 6-phosphate + H2O = beta-D-fructose 6-phosphate + NH4(+)</text>
        <dbReference type="Rhea" id="RHEA:12172"/>
        <dbReference type="ChEBI" id="CHEBI:15377"/>
        <dbReference type="ChEBI" id="CHEBI:28938"/>
        <dbReference type="ChEBI" id="CHEBI:57634"/>
        <dbReference type="ChEBI" id="CHEBI:75989"/>
        <dbReference type="EC" id="3.5.99.6"/>
    </reaction>
</comment>
<comment type="pathway">
    <text evidence="1">Amino-sugar metabolism; N-acetylneuraminate degradation; D-fructose 6-phosphate from N-acetylneuraminate: step 5/5.</text>
</comment>
<comment type="similarity">
    <text evidence="1">Belongs to the glucosamine/galactosamine-6-phosphate isomerase family. NagB subfamily.</text>
</comment>
<accession>Q5HIA6</accession>
<keyword id="KW-0119">Carbohydrate metabolism</keyword>
<keyword id="KW-0378">Hydrolase</keyword>
<gene>
    <name evidence="1" type="primary">nagB</name>
    <name type="ordered locus">SACOL0616</name>
</gene>
<proteinExistence type="inferred from homology"/>
<sequence>MKVLNLGSKKQASFYVACELYKEMAFNQHCKLGLATGGTMTDLYEQLVKLLNKNQLNVDNVSTFNLDEYVGLTASHPQSYHYYMDDMLFKQYPYFNRKNIHIPNGDADDMNAEASKYNDVLEQQGQRDIQILGIGENGHIGFNEPGTPFDSVTHIVDLTESTIKANSRYFKNEDDVPKQAISMGLANILQAKRIILLAFGEKKRAAITHLLNQEISVDVPATLLHKHPNVEIYLDDEACPKNVAKIHVDEMD</sequence>
<organism>
    <name type="scientific">Staphylococcus aureus (strain COL)</name>
    <dbReference type="NCBI Taxonomy" id="93062"/>
    <lineage>
        <taxon>Bacteria</taxon>
        <taxon>Bacillati</taxon>
        <taxon>Bacillota</taxon>
        <taxon>Bacilli</taxon>
        <taxon>Bacillales</taxon>
        <taxon>Staphylococcaceae</taxon>
        <taxon>Staphylococcus</taxon>
    </lineage>
</organism>
<evidence type="ECO:0000255" key="1">
    <source>
        <dbReference type="HAMAP-Rule" id="MF_01241"/>
    </source>
</evidence>
<name>NAGB_STAAC</name>
<reference key="1">
    <citation type="journal article" date="2005" name="J. Bacteriol.">
        <title>Insights on evolution of virulence and resistance from the complete genome analysis of an early methicillin-resistant Staphylococcus aureus strain and a biofilm-producing methicillin-resistant Staphylococcus epidermidis strain.</title>
        <authorList>
            <person name="Gill S.R."/>
            <person name="Fouts D.E."/>
            <person name="Archer G.L."/>
            <person name="Mongodin E.F."/>
            <person name="DeBoy R.T."/>
            <person name="Ravel J."/>
            <person name="Paulsen I.T."/>
            <person name="Kolonay J.F."/>
            <person name="Brinkac L.M."/>
            <person name="Beanan M.J."/>
            <person name="Dodson R.J."/>
            <person name="Daugherty S.C."/>
            <person name="Madupu R."/>
            <person name="Angiuoli S.V."/>
            <person name="Durkin A.S."/>
            <person name="Haft D.H."/>
            <person name="Vamathevan J.J."/>
            <person name="Khouri H."/>
            <person name="Utterback T.R."/>
            <person name="Lee C."/>
            <person name="Dimitrov G."/>
            <person name="Jiang L."/>
            <person name="Qin H."/>
            <person name="Weidman J."/>
            <person name="Tran K."/>
            <person name="Kang K.H."/>
            <person name="Hance I.R."/>
            <person name="Nelson K.E."/>
            <person name="Fraser C.M."/>
        </authorList>
    </citation>
    <scope>NUCLEOTIDE SEQUENCE [LARGE SCALE GENOMIC DNA]</scope>
    <source>
        <strain>COL</strain>
    </source>
</reference>
<protein>
    <recommendedName>
        <fullName evidence="1">Glucosamine-6-phosphate deaminase</fullName>
        <ecNumber evidence="1">3.5.99.6</ecNumber>
    </recommendedName>
    <alternativeName>
        <fullName evidence="1">GlcN6P deaminase</fullName>
        <shortName evidence="1">GNPDA</shortName>
    </alternativeName>
    <alternativeName>
        <fullName evidence="1">Glucosamine-6-phosphate isomerase</fullName>
    </alternativeName>
</protein>